<accession>Q97SG9</accession>
<keyword id="KW-0131">Cell cycle</keyword>
<keyword id="KW-0132">Cell division</keyword>
<keyword id="KW-0143">Chaperone</keyword>
<keyword id="KW-0963">Cytoplasm</keyword>
<keyword id="KW-0413">Isomerase</keyword>
<keyword id="KW-1185">Reference proteome</keyword>
<keyword id="KW-0697">Rotamase</keyword>
<comment type="function">
    <text evidence="1">Involved in protein export. Acts as a chaperone by maintaining the newly synthesized protein in an open conformation. Functions as a peptidyl-prolyl cis-trans isomerase.</text>
</comment>
<comment type="catalytic activity">
    <reaction evidence="1">
        <text>[protein]-peptidylproline (omega=180) = [protein]-peptidylproline (omega=0)</text>
        <dbReference type="Rhea" id="RHEA:16237"/>
        <dbReference type="Rhea" id="RHEA-COMP:10747"/>
        <dbReference type="Rhea" id="RHEA-COMP:10748"/>
        <dbReference type="ChEBI" id="CHEBI:83833"/>
        <dbReference type="ChEBI" id="CHEBI:83834"/>
        <dbReference type="EC" id="5.2.1.8"/>
    </reaction>
</comment>
<comment type="subcellular location">
    <subcellularLocation>
        <location>Cytoplasm</location>
    </subcellularLocation>
    <text evidence="1">About half TF is bound to the ribosome near the polypeptide exit tunnel while the other half is free in the cytoplasm.</text>
</comment>
<comment type="domain">
    <text evidence="1">Consists of 3 domains; the N-terminus binds the ribosome, the middle domain has PPIase activity, while the C-terminus has intrinsic chaperone activity on its own.</text>
</comment>
<comment type="similarity">
    <text evidence="1">Belongs to the FKBP-type PPIase family. Tig subfamily.</text>
</comment>
<feature type="chain" id="PRO_0000179438" description="Trigger factor">
    <location>
        <begin position="1"/>
        <end position="427"/>
    </location>
</feature>
<feature type="domain" description="PPIase FKBP-type" evidence="1">
    <location>
        <begin position="163"/>
        <end position="248"/>
    </location>
</feature>
<organism>
    <name type="scientific">Streptococcus pneumoniae serotype 4 (strain ATCC BAA-334 / TIGR4)</name>
    <dbReference type="NCBI Taxonomy" id="170187"/>
    <lineage>
        <taxon>Bacteria</taxon>
        <taxon>Bacillati</taxon>
        <taxon>Bacillota</taxon>
        <taxon>Bacilli</taxon>
        <taxon>Lactobacillales</taxon>
        <taxon>Streptococcaceae</taxon>
        <taxon>Streptococcus</taxon>
    </lineage>
</organism>
<name>TIG_STRPN</name>
<protein>
    <recommendedName>
        <fullName evidence="1">Trigger factor</fullName>
        <shortName evidence="1">TF</shortName>
        <ecNumber evidence="1">5.2.1.8</ecNumber>
    </recommendedName>
    <alternativeName>
        <fullName evidence="1">PPIase</fullName>
    </alternativeName>
</protein>
<proteinExistence type="inferred from homology"/>
<dbReference type="EC" id="5.2.1.8" evidence="1"/>
<dbReference type="EMBL" id="AE005672">
    <property type="protein sequence ID" value="AAK74563.1"/>
    <property type="molecule type" value="Genomic_DNA"/>
</dbReference>
<dbReference type="PIR" id="B95046">
    <property type="entry name" value="B95046"/>
</dbReference>
<dbReference type="RefSeq" id="WP_000116479.1">
    <property type="nucleotide sequence ID" value="NC_003028.3"/>
</dbReference>
<dbReference type="SMR" id="Q97SG9"/>
<dbReference type="PaxDb" id="170187-SP_0400"/>
<dbReference type="EnsemblBacteria" id="AAK74563">
    <property type="protein sequence ID" value="AAK74563"/>
    <property type="gene ID" value="SP_0400"/>
</dbReference>
<dbReference type="KEGG" id="spn:SP_0400"/>
<dbReference type="eggNOG" id="COG0544">
    <property type="taxonomic scope" value="Bacteria"/>
</dbReference>
<dbReference type="PhylomeDB" id="Q97SG9"/>
<dbReference type="BioCyc" id="SPNE170187:G1FZB-415-MONOMER"/>
<dbReference type="Proteomes" id="UP000000585">
    <property type="component" value="Chromosome"/>
</dbReference>
<dbReference type="GO" id="GO:0005737">
    <property type="term" value="C:cytoplasm"/>
    <property type="evidence" value="ECO:0007669"/>
    <property type="project" value="UniProtKB-SubCell"/>
</dbReference>
<dbReference type="GO" id="GO:0003755">
    <property type="term" value="F:peptidyl-prolyl cis-trans isomerase activity"/>
    <property type="evidence" value="ECO:0007669"/>
    <property type="project" value="UniProtKB-UniRule"/>
</dbReference>
<dbReference type="GO" id="GO:0044183">
    <property type="term" value="F:protein folding chaperone"/>
    <property type="evidence" value="ECO:0007669"/>
    <property type="project" value="TreeGrafter"/>
</dbReference>
<dbReference type="GO" id="GO:0043022">
    <property type="term" value="F:ribosome binding"/>
    <property type="evidence" value="ECO:0007669"/>
    <property type="project" value="TreeGrafter"/>
</dbReference>
<dbReference type="GO" id="GO:0051083">
    <property type="term" value="P:'de novo' cotranslational protein folding"/>
    <property type="evidence" value="ECO:0007669"/>
    <property type="project" value="TreeGrafter"/>
</dbReference>
<dbReference type="GO" id="GO:0051301">
    <property type="term" value="P:cell division"/>
    <property type="evidence" value="ECO:0007669"/>
    <property type="project" value="UniProtKB-KW"/>
</dbReference>
<dbReference type="GO" id="GO:0061077">
    <property type="term" value="P:chaperone-mediated protein folding"/>
    <property type="evidence" value="ECO:0007669"/>
    <property type="project" value="TreeGrafter"/>
</dbReference>
<dbReference type="GO" id="GO:0015031">
    <property type="term" value="P:protein transport"/>
    <property type="evidence" value="ECO:0007669"/>
    <property type="project" value="UniProtKB-UniRule"/>
</dbReference>
<dbReference type="GO" id="GO:0043335">
    <property type="term" value="P:protein unfolding"/>
    <property type="evidence" value="ECO:0007669"/>
    <property type="project" value="TreeGrafter"/>
</dbReference>
<dbReference type="FunFam" id="3.10.50.40:FF:000001">
    <property type="entry name" value="Trigger factor"/>
    <property type="match status" value="1"/>
</dbReference>
<dbReference type="Gene3D" id="3.10.50.40">
    <property type="match status" value="1"/>
</dbReference>
<dbReference type="Gene3D" id="3.30.70.1050">
    <property type="entry name" value="Trigger factor ribosome-binding domain"/>
    <property type="match status" value="1"/>
</dbReference>
<dbReference type="Gene3D" id="1.10.3120.10">
    <property type="entry name" value="Trigger factor, C-terminal domain"/>
    <property type="match status" value="1"/>
</dbReference>
<dbReference type="HAMAP" id="MF_00303">
    <property type="entry name" value="Trigger_factor_Tig"/>
    <property type="match status" value="1"/>
</dbReference>
<dbReference type="InterPro" id="IPR046357">
    <property type="entry name" value="PPIase_dom_sf"/>
</dbReference>
<dbReference type="InterPro" id="IPR001179">
    <property type="entry name" value="PPIase_FKBP_dom"/>
</dbReference>
<dbReference type="InterPro" id="IPR005215">
    <property type="entry name" value="Trig_fac"/>
</dbReference>
<dbReference type="InterPro" id="IPR008880">
    <property type="entry name" value="Trigger_fac_C"/>
</dbReference>
<dbReference type="InterPro" id="IPR037041">
    <property type="entry name" value="Trigger_fac_C_sf"/>
</dbReference>
<dbReference type="InterPro" id="IPR008881">
    <property type="entry name" value="Trigger_fac_ribosome-bd_bac"/>
</dbReference>
<dbReference type="InterPro" id="IPR036611">
    <property type="entry name" value="Trigger_fac_ribosome-bd_sf"/>
</dbReference>
<dbReference type="InterPro" id="IPR027304">
    <property type="entry name" value="Trigger_fact/SurA_dom_sf"/>
</dbReference>
<dbReference type="NCBIfam" id="TIGR00115">
    <property type="entry name" value="tig"/>
    <property type="match status" value="1"/>
</dbReference>
<dbReference type="PANTHER" id="PTHR30560">
    <property type="entry name" value="TRIGGER FACTOR CHAPERONE AND PEPTIDYL-PROLYL CIS/TRANS ISOMERASE"/>
    <property type="match status" value="1"/>
</dbReference>
<dbReference type="PANTHER" id="PTHR30560:SF3">
    <property type="entry name" value="TRIGGER FACTOR-LIKE PROTEIN TIG, CHLOROPLASTIC"/>
    <property type="match status" value="1"/>
</dbReference>
<dbReference type="Pfam" id="PF00254">
    <property type="entry name" value="FKBP_C"/>
    <property type="match status" value="1"/>
</dbReference>
<dbReference type="Pfam" id="PF05698">
    <property type="entry name" value="Trigger_C"/>
    <property type="match status" value="1"/>
</dbReference>
<dbReference type="Pfam" id="PF05697">
    <property type="entry name" value="Trigger_N"/>
    <property type="match status" value="1"/>
</dbReference>
<dbReference type="PIRSF" id="PIRSF003095">
    <property type="entry name" value="Trigger_factor"/>
    <property type="match status" value="1"/>
</dbReference>
<dbReference type="SUPFAM" id="SSF54534">
    <property type="entry name" value="FKBP-like"/>
    <property type="match status" value="1"/>
</dbReference>
<dbReference type="SUPFAM" id="SSF109998">
    <property type="entry name" value="Triger factor/SurA peptide-binding domain-like"/>
    <property type="match status" value="1"/>
</dbReference>
<dbReference type="SUPFAM" id="SSF102735">
    <property type="entry name" value="Trigger factor ribosome-binding domain"/>
    <property type="match status" value="1"/>
</dbReference>
<dbReference type="PROSITE" id="PS50059">
    <property type="entry name" value="FKBP_PPIASE"/>
    <property type="match status" value="1"/>
</dbReference>
<sequence>MSVSFENKETNRGVLTFTISQDQIKPELDRVFKSVKKSLNVPGFRKGHLPRPIFDQKFGEEALYQDAMNALLPNAYEAAVKEAGLEVVAQPKIDVTSMEKGQDWVITAEVVTKPEVKLGDYKNLEVSVDVEKEVTDADVEERIERERNNLAELVIKEAAAENGDTVVIDFVGSIDGVEFDGGKGENFSLGLGSGQFIPGFEDQLVGHSAGETVDVIVTFPEDYQAEDLAGKEAKFVTTIHEVKAKEVPALDDELAKDIDEEVETLADLKEKYSKELAAAKEEAYKDAVEGAAIDTAVENAEIVELPEEMIHEEVHRSVNEFLGNLQRQGINPDMYFQITGTTQEDLHNQYQAEAESRTKTNLVIEAVAKAEGFDASEEEIQKEVEQLAADYNMEVAQVQNLLSADMLKHDITIKKAVELITSTATVK</sequence>
<gene>
    <name evidence="1" type="primary">tig</name>
    <name type="ordered locus">SP_0400</name>
</gene>
<evidence type="ECO:0000255" key="1">
    <source>
        <dbReference type="HAMAP-Rule" id="MF_00303"/>
    </source>
</evidence>
<reference key="1">
    <citation type="journal article" date="2001" name="Science">
        <title>Complete genome sequence of a virulent isolate of Streptococcus pneumoniae.</title>
        <authorList>
            <person name="Tettelin H."/>
            <person name="Nelson K.E."/>
            <person name="Paulsen I.T."/>
            <person name="Eisen J.A."/>
            <person name="Read T.D."/>
            <person name="Peterson S.N."/>
            <person name="Heidelberg J.F."/>
            <person name="DeBoy R.T."/>
            <person name="Haft D.H."/>
            <person name="Dodson R.J."/>
            <person name="Durkin A.S."/>
            <person name="Gwinn M.L."/>
            <person name="Kolonay J.F."/>
            <person name="Nelson W.C."/>
            <person name="Peterson J.D."/>
            <person name="Umayam L.A."/>
            <person name="White O."/>
            <person name="Salzberg S.L."/>
            <person name="Lewis M.R."/>
            <person name="Radune D."/>
            <person name="Holtzapple E.K."/>
            <person name="Khouri H.M."/>
            <person name="Wolf A.M."/>
            <person name="Utterback T.R."/>
            <person name="Hansen C.L."/>
            <person name="McDonald L.A."/>
            <person name="Feldblyum T.V."/>
            <person name="Angiuoli S.V."/>
            <person name="Dickinson T."/>
            <person name="Hickey E.K."/>
            <person name="Holt I.E."/>
            <person name="Loftus B.J."/>
            <person name="Yang F."/>
            <person name="Smith H.O."/>
            <person name="Venter J.C."/>
            <person name="Dougherty B.A."/>
            <person name="Morrison D.A."/>
            <person name="Hollingshead S.K."/>
            <person name="Fraser C.M."/>
        </authorList>
    </citation>
    <scope>NUCLEOTIDE SEQUENCE [LARGE SCALE GENOMIC DNA]</scope>
    <source>
        <strain>ATCC BAA-334 / TIGR4</strain>
    </source>
</reference>